<proteinExistence type="evidence at protein level"/>
<accession>Q8JZW5</accession>
<organism>
    <name type="scientific">Mus musculus</name>
    <name type="common">Mouse</name>
    <dbReference type="NCBI Taxonomy" id="10090"/>
    <lineage>
        <taxon>Eukaryota</taxon>
        <taxon>Metazoa</taxon>
        <taxon>Chordata</taxon>
        <taxon>Craniata</taxon>
        <taxon>Vertebrata</taxon>
        <taxon>Euteleostomi</taxon>
        <taxon>Mammalia</taxon>
        <taxon>Eutheria</taxon>
        <taxon>Euarchontoglires</taxon>
        <taxon>Glires</taxon>
        <taxon>Rodentia</taxon>
        <taxon>Myomorpha</taxon>
        <taxon>Muroidea</taxon>
        <taxon>Muridae</taxon>
        <taxon>Murinae</taxon>
        <taxon>Mus</taxon>
        <taxon>Mus</taxon>
    </lineage>
</organism>
<dbReference type="EMBL" id="BC036961">
    <property type="protein sequence ID" value="AAH36961.1"/>
    <property type="status" value="ALT_INIT"/>
    <property type="molecule type" value="mRNA"/>
</dbReference>
<dbReference type="CCDS" id="CCDS51335.1"/>
<dbReference type="RefSeq" id="NP_001093101.1">
    <property type="nucleotide sequence ID" value="NM_001099631.2"/>
</dbReference>
<dbReference type="SMR" id="Q8JZW5"/>
<dbReference type="FunCoup" id="Q8JZW5">
    <property type="interactions" value="103"/>
</dbReference>
<dbReference type="IntAct" id="Q8JZW5">
    <property type="interactions" value="2"/>
</dbReference>
<dbReference type="STRING" id="10090.ENSMUSP00000101449"/>
<dbReference type="iPTMnet" id="Q8JZW5"/>
<dbReference type="PhosphoSitePlus" id="Q8JZW5"/>
<dbReference type="PaxDb" id="10090-ENSMUSP00000101450"/>
<dbReference type="ProteomicsDB" id="255401"/>
<dbReference type="Antibodypedia" id="48002">
    <property type="antibodies" value="88 antibodies from 25 providers"/>
</dbReference>
<dbReference type="Ensembl" id="ENSMUST00000105823.2">
    <property type="protein sequence ID" value="ENSMUSP00000101449.2"/>
    <property type="gene ID" value="ENSMUSG00000045349.16"/>
</dbReference>
<dbReference type="Ensembl" id="ENSMUST00000105824.8">
    <property type="protein sequence ID" value="ENSMUSP00000101450.2"/>
    <property type="gene ID" value="ENSMUSG00000045349.16"/>
</dbReference>
<dbReference type="GeneID" id="230863"/>
<dbReference type="KEGG" id="mmu:230863"/>
<dbReference type="AGR" id="MGI:2446215"/>
<dbReference type="CTD" id="400745"/>
<dbReference type="MGI" id="MGI:2446215">
    <property type="gene designation" value="Sh2d5"/>
</dbReference>
<dbReference type="VEuPathDB" id="HostDB:ENSMUSG00000045349"/>
<dbReference type="eggNOG" id="ENOG502RXFM">
    <property type="taxonomic scope" value="Eukaryota"/>
</dbReference>
<dbReference type="GeneTree" id="ENSGT00510000048936"/>
<dbReference type="InParanoid" id="Q8JZW5"/>
<dbReference type="OMA" id="QDCGPEG"/>
<dbReference type="OrthoDB" id="10013007at2759"/>
<dbReference type="PRO" id="PR:Q8JZW5"/>
<dbReference type="Proteomes" id="UP000000589">
    <property type="component" value="Chromosome 4"/>
</dbReference>
<dbReference type="RNAct" id="Q8JZW5">
    <property type="molecule type" value="protein"/>
</dbReference>
<dbReference type="Bgee" id="ENSMUSG00000045349">
    <property type="expression patterns" value="Expressed in caudate-putamen and 187 other cell types or tissues"/>
</dbReference>
<dbReference type="ExpressionAtlas" id="Q8JZW5">
    <property type="expression patterns" value="baseline and differential"/>
</dbReference>
<dbReference type="GO" id="GO:0014069">
    <property type="term" value="C:postsynaptic density"/>
    <property type="evidence" value="ECO:0000314"/>
    <property type="project" value="UniProtKB"/>
</dbReference>
<dbReference type="CDD" id="cd13157">
    <property type="entry name" value="PTB_tensin-related"/>
    <property type="match status" value="1"/>
</dbReference>
<dbReference type="CDD" id="cd00173">
    <property type="entry name" value="SH2"/>
    <property type="match status" value="1"/>
</dbReference>
<dbReference type="FunFam" id="2.30.29.30:FF:000290">
    <property type="entry name" value="SH2 domain-containing protein 5"/>
    <property type="match status" value="1"/>
</dbReference>
<dbReference type="Gene3D" id="2.30.29.30">
    <property type="entry name" value="Pleckstrin-homology domain (PH domain)/Phosphotyrosine-binding domain (PTB)"/>
    <property type="match status" value="1"/>
</dbReference>
<dbReference type="Gene3D" id="3.30.505.10">
    <property type="entry name" value="SH2 domain"/>
    <property type="match status" value="1"/>
</dbReference>
<dbReference type="InterPro" id="IPR011993">
    <property type="entry name" value="PH-like_dom_sf"/>
</dbReference>
<dbReference type="InterPro" id="IPR006020">
    <property type="entry name" value="PTB/PI_dom"/>
</dbReference>
<dbReference type="InterPro" id="IPR000980">
    <property type="entry name" value="SH2"/>
</dbReference>
<dbReference type="InterPro" id="IPR036860">
    <property type="entry name" value="SH2_dom_sf"/>
</dbReference>
<dbReference type="PANTHER" id="PTHR15832:SF3">
    <property type="entry name" value="SH2 DOMAIN-CONTAINING PROTEIN 5"/>
    <property type="match status" value="1"/>
</dbReference>
<dbReference type="PANTHER" id="PTHR15832">
    <property type="entry name" value="SHC (SRC HOMOLOGY DOMAIN C-TERMINAL) ADAPTOR HOMOLOG"/>
    <property type="match status" value="1"/>
</dbReference>
<dbReference type="SMART" id="SM00462">
    <property type="entry name" value="PTB"/>
    <property type="match status" value="1"/>
</dbReference>
<dbReference type="SUPFAM" id="SSF50729">
    <property type="entry name" value="PH domain-like"/>
    <property type="match status" value="1"/>
</dbReference>
<dbReference type="SUPFAM" id="SSF55550">
    <property type="entry name" value="SH2 domain"/>
    <property type="match status" value="1"/>
</dbReference>
<dbReference type="PROSITE" id="PS01179">
    <property type="entry name" value="PID"/>
    <property type="match status" value="1"/>
</dbReference>
<dbReference type="PROSITE" id="PS50001">
    <property type="entry name" value="SH2"/>
    <property type="match status" value="1"/>
</dbReference>
<reference key="1">
    <citation type="journal article" date="2004" name="Genome Res.">
        <title>The status, quality, and expansion of the NIH full-length cDNA project: the Mammalian Gene Collection (MGC).</title>
        <authorList>
            <consortium name="The MGC Project Team"/>
        </authorList>
    </citation>
    <scope>NUCLEOTIDE SEQUENCE [LARGE SCALE MRNA]</scope>
    <source>
        <tissue>Eye</tissue>
    </source>
</reference>
<reference key="2">
    <citation type="journal article" date="2010" name="Cell">
        <title>A tissue-specific atlas of mouse protein phosphorylation and expression.</title>
        <authorList>
            <person name="Huttlin E.L."/>
            <person name="Jedrychowski M.P."/>
            <person name="Elias J.E."/>
            <person name="Goswami T."/>
            <person name="Rad R."/>
            <person name="Beausoleil S.A."/>
            <person name="Villen J."/>
            <person name="Haas W."/>
            <person name="Sowa M.E."/>
            <person name="Gygi S.P."/>
        </authorList>
    </citation>
    <scope>IDENTIFICATION BY MASS SPECTROMETRY [LARGE SCALE ANALYSIS]</scope>
    <source>
        <tissue>Brain</tissue>
    </source>
</reference>
<reference key="3">
    <citation type="journal article" date="2014" name="J. Biol. Chem.">
        <title>src homology 2 domain containing protein 5 (sh2d5) binds the breakpoint cluster region protein, BCR, and regulates levels of Rac1-GTP.</title>
        <authorList>
            <person name="Gray E.J."/>
            <person name="Petsalaki E."/>
            <person name="James D.A."/>
            <person name="Bagshaw R.D."/>
            <person name="Stacey M.M."/>
            <person name="Rocks O."/>
            <person name="Gingras A.C."/>
            <person name="Pawson T."/>
        </authorList>
    </citation>
    <scope>FUNCTION</scope>
    <scope>TISSUE SPECIFICITY</scope>
    <scope>INTERACTION WITH BCR</scope>
    <scope>SUBCELLULAR LOCATION</scope>
</reference>
<protein>
    <recommendedName>
        <fullName evidence="1">SH2 domain-containing protein 5</fullName>
    </recommendedName>
</protein>
<comment type="function">
    <text evidence="4">May be involved in synaptic plasticity regulation through the control of Rac-GTP levels.</text>
</comment>
<comment type="subunit">
    <text evidence="3">Interacts with BCR.</text>
</comment>
<comment type="interaction">
    <interactant intactId="EBI-15101675">
        <id>Q8JZW5</id>
    </interactant>
    <interactant intactId="EBI-712838">
        <id>P11274</id>
        <label>BCR</label>
    </interactant>
    <organismsDiffer>true</organismsDiffer>
    <experiments>2</experiments>
</comment>
<comment type="subcellular location">
    <subcellularLocation>
        <location evidence="3">Postsynaptic density</location>
    </subcellularLocation>
</comment>
<comment type="tissue specificity">
    <text evidence="3">Highly expressed in brain, particularly in Purkinjie cells in the cerebellum and the cornu ammonis of the hippocampus.</text>
</comment>
<comment type="sequence caution" evidence="5">
    <conflict type="erroneous initiation">
        <sequence resource="EMBL-CDS" id="AAH36961"/>
    </conflict>
    <text>Extended N-terminus.</text>
</comment>
<sequence>MQRAGAGARRASDCGPAPYRPRCIAKLAQYVGSFPVDDLDTQESVGLVQQQLWALQDCSRRRAVILKFSLQGLKIYSGEGEVLLMAHALKRILYATWYPAACQFAFIARNPRSPSSKLFCHLFVGSQPGEVHILYLLLCRSFQLAYLLQHPEERAQSEPCLAPVGDLSLKPLCSPGVPPALVREPFSRDQLSQNVHALVSFRRLPAEGLLGSNGKELPESEGRGGTRHIRLGNPYCSPTLVRKKAIRSKVIRSGAYRGCTYETQLQLSAREAFPAAWEAWPRGPGGPSCLVENEGSLTENIWAFAGLSRSCALSLLRRDVHGAFLLWPEPGTSDQWSLSVRTQCGVVPHQVFRNHLGRFCLEHLPAEFPSLEALVESHAGVERSLFCPLSMGRLNPTYEEQDCGTEGRFPRTLRPLSHAKSEAELQGLG</sequence>
<keyword id="KW-1185">Reference proteome</keyword>
<keyword id="KW-0727">SH2 domain</keyword>
<keyword id="KW-0770">Synapse</keyword>
<evidence type="ECO:0000250" key="1">
    <source>
        <dbReference type="UniProtKB" id="Q6ZV89"/>
    </source>
</evidence>
<evidence type="ECO:0000255" key="2">
    <source>
        <dbReference type="PROSITE-ProRule" id="PRU00191"/>
    </source>
</evidence>
<evidence type="ECO:0000269" key="3">
    <source>
    </source>
</evidence>
<evidence type="ECO:0000303" key="4">
    <source>
    </source>
</evidence>
<evidence type="ECO:0000305" key="5"/>
<evidence type="ECO:0000312" key="6">
    <source>
        <dbReference type="MGI" id="MGI:2446215"/>
    </source>
</evidence>
<name>SH2D5_MOUSE</name>
<gene>
    <name evidence="6" type="primary">Sh2d5</name>
</gene>
<feature type="chain" id="PRO_0000231582" description="SH2 domain-containing protein 5">
    <location>
        <begin position="1"/>
        <end position="429"/>
    </location>
</feature>
<feature type="domain" description="SH2" evidence="2">
    <location>
        <begin position="302"/>
        <end position="398"/>
    </location>
</feature>